<keyword id="KW-0067">ATP-binding</keyword>
<keyword id="KW-0436">Ligase</keyword>
<keyword id="KW-0479">Metal-binding</keyword>
<keyword id="KW-0547">Nucleotide-binding</keyword>
<keyword id="KW-0671">Queuosine biosynthesis</keyword>
<keyword id="KW-1185">Reference proteome</keyword>
<keyword id="KW-0862">Zinc</keyword>
<comment type="function">
    <text evidence="1">Catalyzes the ATP-dependent conversion of 7-carboxy-7-deazaguanine (CDG) to 7-cyano-7-deazaguanine (preQ(0)).</text>
</comment>
<comment type="catalytic activity">
    <reaction evidence="1">
        <text>7-carboxy-7-deazaguanine + NH4(+) + ATP = 7-cyano-7-deazaguanine + ADP + phosphate + H2O + H(+)</text>
        <dbReference type="Rhea" id="RHEA:27982"/>
        <dbReference type="ChEBI" id="CHEBI:15377"/>
        <dbReference type="ChEBI" id="CHEBI:15378"/>
        <dbReference type="ChEBI" id="CHEBI:28938"/>
        <dbReference type="ChEBI" id="CHEBI:30616"/>
        <dbReference type="ChEBI" id="CHEBI:43474"/>
        <dbReference type="ChEBI" id="CHEBI:45075"/>
        <dbReference type="ChEBI" id="CHEBI:61036"/>
        <dbReference type="ChEBI" id="CHEBI:456216"/>
        <dbReference type="EC" id="6.3.4.20"/>
    </reaction>
</comment>
<comment type="cofactor">
    <cofactor evidence="1">
        <name>Zn(2+)</name>
        <dbReference type="ChEBI" id="CHEBI:29105"/>
    </cofactor>
    <text evidence="1">Binds 1 zinc ion per subunit.</text>
</comment>
<comment type="pathway">
    <text evidence="1">Purine metabolism; 7-cyano-7-deazaguanine biosynthesis.</text>
</comment>
<comment type="similarity">
    <text evidence="1">Belongs to the QueC family.</text>
</comment>
<protein>
    <recommendedName>
        <fullName evidence="1">7-cyano-7-deazaguanine synthase</fullName>
        <ecNumber evidence="1">6.3.4.20</ecNumber>
    </recommendedName>
    <alternativeName>
        <fullName evidence="1">7-cyano-7-carbaguanine synthase</fullName>
    </alternativeName>
    <alternativeName>
        <fullName evidence="1">PreQ(0) synthase</fullName>
    </alternativeName>
    <alternativeName>
        <fullName evidence="1">Queuosine biosynthesis protein QueC</fullName>
    </alternativeName>
</protein>
<sequence length="222" mass="23588">MSSTTIALLSGGLDSATAAALAREAGHRVIGLSFDYGQRHQRELRAAAEVAQALGLAEHHTINVNLAAWGGSSLTDLDQPVPDQGVQDGVIPSTYVPGRNTVFIALGLSLAEAKGAERLVLGVNAIDYSGYPDCRPDYLDAYQHLADLASRSGREGHGTQLWAPLVEWSKTKIVEEALRLNVPIASTWSCYAGGDHPCGVCDSCRIRDAALREAGRPDLASR</sequence>
<name>QUEC_SYNR3</name>
<reference key="1">
    <citation type="submission" date="2006-05" db="EMBL/GenBank/DDBJ databases">
        <authorList>
            <consortium name="Genoscope"/>
        </authorList>
    </citation>
    <scope>NUCLEOTIDE SEQUENCE [LARGE SCALE GENOMIC DNA]</scope>
    <source>
        <strain>RCC307</strain>
    </source>
</reference>
<proteinExistence type="inferred from homology"/>
<dbReference type="EC" id="6.3.4.20" evidence="1"/>
<dbReference type="EMBL" id="CT978603">
    <property type="protein sequence ID" value="CAK29347.1"/>
    <property type="molecule type" value="Genomic_DNA"/>
</dbReference>
<dbReference type="SMR" id="A5GWT8"/>
<dbReference type="STRING" id="316278.SynRCC307_2444"/>
<dbReference type="KEGG" id="syr:SynRCC307_2444"/>
<dbReference type="eggNOG" id="COG0603">
    <property type="taxonomic scope" value="Bacteria"/>
</dbReference>
<dbReference type="HOGENOM" id="CLU_081854_1_0_3"/>
<dbReference type="OrthoDB" id="9789567at2"/>
<dbReference type="UniPathway" id="UPA00391"/>
<dbReference type="Proteomes" id="UP000001115">
    <property type="component" value="Chromosome"/>
</dbReference>
<dbReference type="GO" id="GO:0005524">
    <property type="term" value="F:ATP binding"/>
    <property type="evidence" value="ECO:0007669"/>
    <property type="project" value="UniProtKB-UniRule"/>
</dbReference>
<dbReference type="GO" id="GO:0016879">
    <property type="term" value="F:ligase activity, forming carbon-nitrogen bonds"/>
    <property type="evidence" value="ECO:0007669"/>
    <property type="project" value="UniProtKB-UniRule"/>
</dbReference>
<dbReference type="GO" id="GO:0008270">
    <property type="term" value="F:zinc ion binding"/>
    <property type="evidence" value="ECO:0007669"/>
    <property type="project" value="UniProtKB-UniRule"/>
</dbReference>
<dbReference type="GO" id="GO:0008616">
    <property type="term" value="P:queuosine biosynthetic process"/>
    <property type="evidence" value="ECO:0007669"/>
    <property type="project" value="UniProtKB-UniRule"/>
</dbReference>
<dbReference type="CDD" id="cd01995">
    <property type="entry name" value="QueC-like"/>
    <property type="match status" value="1"/>
</dbReference>
<dbReference type="Gene3D" id="3.40.50.620">
    <property type="entry name" value="HUPs"/>
    <property type="match status" value="1"/>
</dbReference>
<dbReference type="HAMAP" id="MF_01633">
    <property type="entry name" value="QueC"/>
    <property type="match status" value="1"/>
</dbReference>
<dbReference type="InterPro" id="IPR018317">
    <property type="entry name" value="QueC"/>
</dbReference>
<dbReference type="InterPro" id="IPR014729">
    <property type="entry name" value="Rossmann-like_a/b/a_fold"/>
</dbReference>
<dbReference type="NCBIfam" id="TIGR00364">
    <property type="entry name" value="7-cyano-7-deazaguanine synthase QueC"/>
    <property type="match status" value="1"/>
</dbReference>
<dbReference type="PANTHER" id="PTHR42914">
    <property type="entry name" value="7-CYANO-7-DEAZAGUANINE SYNTHASE"/>
    <property type="match status" value="1"/>
</dbReference>
<dbReference type="PANTHER" id="PTHR42914:SF1">
    <property type="entry name" value="7-CYANO-7-DEAZAGUANINE SYNTHASE"/>
    <property type="match status" value="1"/>
</dbReference>
<dbReference type="Pfam" id="PF06508">
    <property type="entry name" value="QueC"/>
    <property type="match status" value="1"/>
</dbReference>
<dbReference type="PIRSF" id="PIRSF006293">
    <property type="entry name" value="ExsB"/>
    <property type="match status" value="1"/>
</dbReference>
<dbReference type="SUPFAM" id="SSF52402">
    <property type="entry name" value="Adenine nucleotide alpha hydrolases-like"/>
    <property type="match status" value="1"/>
</dbReference>
<organism>
    <name type="scientific">Synechococcus sp. (strain RCC307)</name>
    <dbReference type="NCBI Taxonomy" id="316278"/>
    <lineage>
        <taxon>Bacteria</taxon>
        <taxon>Bacillati</taxon>
        <taxon>Cyanobacteriota</taxon>
        <taxon>Cyanophyceae</taxon>
        <taxon>Synechococcales</taxon>
        <taxon>Synechococcaceae</taxon>
        <taxon>Synechococcus</taxon>
    </lineage>
</organism>
<evidence type="ECO:0000255" key="1">
    <source>
        <dbReference type="HAMAP-Rule" id="MF_01633"/>
    </source>
</evidence>
<gene>
    <name evidence="1" type="primary">queC</name>
    <name type="ordered locus">SynRCC307_2444</name>
</gene>
<accession>A5GWT8</accession>
<feature type="chain" id="PRO_0000336960" description="7-cyano-7-deazaguanine synthase">
    <location>
        <begin position="1"/>
        <end position="222"/>
    </location>
</feature>
<feature type="binding site" evidence="1">
    <location>
        <begin position="9"/>
        <end position="19"/>
    </location>
    <ligand>
        <name>ATP</name>
        <dbReference type="ChEBI" id="CHEBI:30616"/>
    </ligand>
</feature>
<feature type="binding site" evidence="1">
    <location>
        <position position="190"/>
    </location>
    <ligand>
        <name>Zn(2+)</name>
        <dbReference type="ChEBI" id="CHEBI:29105"/>
    </ligand>
</feature>
<feature type="binding site" evidence="1">
    <location>
        <position position="198"/>
    </location>
    <ligand>
        <name>Zn(2+)</name>
        <dbReference type="ChEBI" id="CHEBI:29105"/>
    </ligand>
</feature>
<feature type="binding site" evidence="1">
    <location>
        <position position="201"/>
    </location>
    <ligand>
        <name>Zn(2+)</name>
        <dbReference type="ChEBI" id="CHEBI:29105"/>
    </ligand>
</feature>
<feature type="binding site" evidence="1">
    <location>
        <position position="204"/>
    </location>
    <ligand>
        <name>Zn(2+)</name>
        <dbReference type="ChEBI" id="CHEBI:29105"/>
    </ligand>
</feature>